<name>DAPA_FERNB</name>
<protein>
    <recommendedName>
        <fullName evidence="1">4-hydroxy-tetrahydrodipicolinate synthase</fullName>
        <shortName evidence="1">HTPA synthase</shortName>
        <ecNumber evidence="1">4.3.3.7</ecNumber>
    </recommendedName>
</protein>
<evidence type="ECO:0000255" key="1">
    <source>
        <dbReference type="HAMAP-Rule" id="MF_00418"/>
    </source>
</evidence>
<evidence type="ECO:0000305" key="2"/>
<keyword id="KW-0028">Amino-acid biosynthesis</keyword>
<keyword id="KW-0963">Cytoplasm</keyword>
<keyword id="KW-0220">Diaminopimelate biosynthesis</keyword>
<keyword id="KW-0456">Lyase</keyword>
<keyword id="KW-0457">Lysine biosynthesis</keyword>
<keyword id="KW-1185">Reference proteome</keyword>
<keyword id="KW-0704">Schiff base</keyword>
<dbReference type="EC" id="4.3.3.7" evidence="1"/>
<dbReference type="EMBL" id="CP000771">
    <property type="protein sequence ID" value="ABS59939.1"/>
    <property type="status" value="ALT_INIT"/>
    <property type="molecule type" value="Genomic_DNA"/>
</dbReference>
<dbReference type="RefSeq" id="WP_041257010.1">
    <property type="nucleotide sequence ID" value="NC_009718.1"/>
</dbReference>
<dbReference type="SMR" id="A7HJ56"/>
<dbReference type="STRING" id="381764.Fnod_0072"/>
<dbReference type="KEGG" id="fno:Fnod_0072"/>
<dbReference type="eggNOG" id="COG0329">
    <property type="taxonomic scope" value="Bacteria"/>
</dbReference>
<dbReference type="HOGENOM" id="CLU_049343_7_1_0"/>
<dbReference type="OrthoDB" id="9782828at2"/>
<dbReference type="UniPathway" id="UPA00034">
    <property type="reaction ID" value="UER00017"/>
</dbReference>
<dbReference type="Proteomes" id="UP000002415">
    <property type="component" value="Chromosome"/>
</dbReference>
<dbReference type="GO" id="GO:0005829">
    <property type="term" value="C:cytosol"/>
    <property type="evidence" value="ECO:0007669"/>
    <property type="project" value="TreeGrafter"/>
</dbReference>
<dbReference type="GO" id="GO:0008840">
    <property type="term" value="F:4-hydroxy-tetrahydrodipicolinate synthase activity"/>
    <property type="evidence" value="ECO:0007669"/>
    <property type="project" value="UniProtKB-UniRule"/>
</dbReference>
<dbReference type="GO" id="GO:0019877">
    <property type="term" value="P:diaminopimelate biosynthetic process"/>
    <property type="evidence" value="ECO:0007669"/>
    <property type="project" value="UniProtKB-UniRule"/>
</dbReference>
<dbReference type="GO" id="GO:0009089">
    <property type="term" value="P:lysine biosynthetic process via diaminopimelate"/>
    <property type="evidence" value="ECO:0007669"/>
    <property type="project" value="UniProtKB-UniRule"/>
</dbReference>
<dbReference type="CDD" id="cd00950">
    <property type="entry name" value="DHDPS"/>
    <property type="match status" value="1"/>
</dbReference>
<dbReference type="Gene3D" id="3.20.20.70">
    <property type="entry name" value="Aldolase class I"/>
    <property type="match status" value="1"/>
</dbReference>
<dbReference type="HAMAP" id="MF_00418">
    <property type="entry name" value="DapA"/>
    <property type="match status" value="1"/>
</dbReference>
<dbReference type="InterPro" id="IPR013785">
    <property type="entry name" value="Aldolase_TIM"/>
</dbReference>
<dbReference type="InterPro" id="IPR005263">
    <property type="entry name" value="DapA"/>
</dbReference>
<dbReference type="InterPro" id="IPR002220">
    <property type="entry name" value="DapA-like"/>
</dbReference>
<dbReference type="InterPro" id="IPR020625">
    <property type="entry name" value="Schiff_base-form_aldolases_AS"/>
</dbReference>
<dbReference type="InterPro" id="IPR020624">
    <property type="entry name" value="Schiff_base-form_aldolases_CS"/>
</dbReference>
<dbReference type="NCBIfam" id="TIGR00674">
    <property type="entry name" value="dapA"/>
    <property type="match status" value="1"/>
</dbReference>
<dbReference type="PANTHER" id="PTHR12128:SF66">
    <property type="entry name" value="4-HYDROXY-2-OXOGLUTARATE ALDOLASE, MITOCHONDRIAL"/>
    <property type="match status" value="1"/>
</dbReference>
<dbReference type="PANTHER" id="PTHR12128">
    <property type="entry name" value="DIHYDRODIPICOLINATE SYNTHASE"/>
    <property type="match status" value="1"/>
</dbReference>
<dbReference type="Pfam" id="PF00701">
    <property type="entry name" value="DHDPS"/>
    <property type="match status" value="1"/>
</dbReference>
<dbReference type="PIRSF" id="PIRSF001365">
    <property type="entry name" value="DHDPS"/>
    <property type="match status" value="1"/>
</dbReference>
<dbReference type="PRINTS" id="PR00146">
    <property type="entry name" value="DHPICSNTHASE"/>
</dbReference>
<dbReference type="SMART" id="SM01130">
    <property type="entry name" value="DHDPS"/>
    <property type="match status" value="1"/>
</dbReference>
<dbReference type="SUPFAM" id="SSF51569">
    <property type="entry name" value="Aldolase"/>
    <property type="match status" value="1"/>
</dbReference>
<dbReference type="PROSITE" id="PS00665">
    <property type="entry name" value="DHDPS_1"/>
    <property type="match status" value="1"/>
</dbReference>
<dbReference type="PROSITE" id="PS00666">
    <property type="entry name" value="DHDPS_2"/>
    <property type="match status" value="1"/>
</dbReference>
<gene>
    <name evidence="1" type="primary">dapA</name>
    <name type="ordered locus">Fnod_0072</name>
</gene>
<sequence>MFTGVGTAIVTPFSNGEVDYGSYEKLVRWQIESGVKAIVVAGTTGEGVTLTVEEREKLVALTKQICEGKAQVIVGTGTNDTRKTLELSLSAEKSGADALLIVTPYYNKPTQEGLYAHYKYLSERLSKPIIIYNVPSRTGVNISPETVARLASDCKNIVAIKEANTDVNQADEIYRLTNGDFYIYSGNDDRAFHMICAGAKGVISVASNIIPEQMVELANKTLQNDVVTARNIHFKYLELMKVLFVETNPIPVKAALNLLGIIKNELRLPLVPAKQSTVELLEKVMKKVGVLS</sequence>
<organism>
    <name type="scientific">Fervidobacterium nodosum (strain ATCC 35602 / DSM 5306 / Rt17-B1)</name>
    <dbReference type="NCBI Taxonomy" id="381764"/>
    <lineage>
        <taxon>Bacteria</taxon>
        <taxon>Thermotogati</taxon>
        <taxon>Thermotogota</taxon>
        <taxon>Thermotogae</taxon>
        <taxon>Thermotogales</taxon>
        <taxon>Fervidobacteriaceae</taxon>
        <taxon>Fervidobacterium</taxon>
    </lineage>
</organism>
<feature type="chain" id="PRO_0000340950" description="4-hydroxy-tetrahydrodipicolinate synthase">
    <location>
        <begin position="1"/>
        <end position="292"/>
    </location>
</feature>
<feature type="active site" description="Proton donor/acceptor" evidence="1">
    <location>
        <position position="132"/>
    </location>
</feature>
<feature type="active site" description="Schiff-base intermediate with substrate" evidence="1">
    <location>
        <position position="161"/>
    </location>
</feature>
<feature type="binding site" evidence="1">
    <location>
        <position position="44"/>
    </location>
    <ligand>
        <name>pyruvate</name>
        <dbReference type="ChEBI" id="CHEBI:15361"/>
    </ligand>
</feature>
<feature type="binding site" evidence="1">
    <location>
        <position position="203"/>
    </location>
    <ligand>
        <name>pyruvate</name>
        <dbReference type="ChEBI" id="CHEBI:15361"/>
    </ligand>
</feature>
<feature type="site" description="Part of a proton relay during catalysis" evidence="1">
    <location>
        <position position="43"/>
    </location>
</feature>
<feature type="site" description="Part of a proton relay during catalysis" evidence="1">
    <location>
        <position position="106"/>
    </location>
</feature>
<reference key="1">
    <citation type="submission" date="2007-07" db="EMBL/GenBank/DDBJ databases">
        <title>Complete sequence of Fervidobacterium nodosum Rt17-B1.</title>
        <authorList>
            <consortium name="US DOE Joint Genome Institute"/>
            <person name="Copeland A."/>
            <person name="Lucas S."/>
            <person name="Lapidus A."/>
            <person name="Barry K."/>
            <person name="Glavina del Rio T."/>
            <person name="Dalin E."/>
            <person name="Tice H."/>
            <person name="Pitluck S."/>
            <person name="Saunders E."/>
            <person name="Brettin T."/>
            <person name="Bruce D."/>
            <person name="Detter J.C."/>
            <person name="Han C."/>
            <person name="Schmutz J."/>
            <person name="Larimer F."/>
            <person name="Land M."/>
            <person name="Hauser L."/>
            <person name="Kyrpides N."/>
            <person name="Mikhailova N."/>
            <person name="Nelson K."/>
            <person name="Gogarten J.P."/>
            <person name="Noll K."/>
            <person name="Richardson P."/>
        </authorList>
    </citation>
    <scope>NUCLEOTIDE SEQUENCE [LARGE SCALE GENOMIC DNA]</scope>
    <source>
        <strain>ATCC 35602 / DSM 5306 / Rt17-B1</strain>
    </source>
</reference>
<comment type="function">
    <text evidence="1">Catalyzes the condensation of (S)-aspartate-beta-semialdehyde [(S)-ASA] and pyruvate to 4-hydroxy-tetrahydrodipicolinate (HTPA).</text>
</comment>
<comment type="catalytic activity">
    <reaction evidence="1">
        <text>L-aspartate 4-semialdehyde + pyruvate = (2S,4S)-4-hydroxy-2,3,4,5-tetrahydrodipicolinate + H2O + H(+)</text>
        <dbReference type="Rhea" id="RHEA:34171"/>
        <dbReference type="ChEBI" id="CHEBI:15361"/>
        <dbReference type="ChEBI" id="CHEBI:15377"/>
        <dbReference type="ChEBI" id="CHEBI:15378"/>
        <dbReference type="ChEBI" id="CHEBI:67139"/>
        <dbReference type="ChEBI" id="CHEBI:537519"/>
        <dbReference type="EC" id="4.3.3.7"/>
    </reaction>
</comment>
<comment type="pathway">
    <text evidence="1">Amino-acid biosynthesis; L-lysine biosynthesis via DAP pathway; (S)-tetrahydrodipicolinate from L-aspartate: step 3/4.</text>
</comment>
<comment type="subunit">
    <text evidence="1">Homotetramer; dimer of dimers.</text>
</comment>
<comment type="subcellular location">
    <subcellularLocation>
        <location evidence="1">Cytoplasm</location>
    </subcellularLocation>
</comment>
<comment type="similarity">
    <text evidence="1">Belongs to the DapA family.</text>
</comment>
<comment type="caution">
    <text evidence="2">Was originally thought to be a dihydrodipicolinate synthase (DHDPS), catalyzing the condensation of (S)-aspartate-beta-semialdehyde [(S)-ASA] and pyruvate to dihydrodipicolinate (DHDP). However, it was shown in E.coli that the product of the enzymatic reaction is not dihydrodipicolinate but in fact (4S)-4-hydroxy-2,3,4,5-tetrahydro-(2S)-dipicolinic acid (HTPA), and that the consecutive dehydration reaction leading to DHDP is not spontaneous but catalyzed by DapB.</text>
</comment>
<comment type="sequence caution" evidence="2">
    <conflict type="erroneous initiation">
        <sequence resource="EMBL-CDS" id="ABS59939"/>
    </conflict>
</comment>
<accession>A7HJ56</accession>
<proteinExistence type="inferred from homology"/>